<comment type="function">
    <text evidence="1">RNaseP catalyzes the removal of the 5'-leader sequence from pre-tRNA to produce the mature 5'-terminus. It can also cleave other RNA substrates such as 4.5S RNA. The protein component plays an auxiliary but essential role in vivo by binding to the 5'-leader sequence and broadening the substrate specificity of the ribozyme.</text>
</comment>
<comment type="catalytic activity">
    <reaction evidence="1">
        <text>Endonucleolytic cleavage of RNA, removing 5'-extranucleotides from tRNA precursor.</text>
        <dbReference type="EC" id="3.1.26.5"/>
    </reaction>
</comment>
<comment type="subunit">
    <text evidence="1">Consists of a catalytic RNA component (M1 or rnpB) and a protein subunit.</text>
</comment>
<comment type="similarity">
    <text evidence="1">Belongs to the RnpA family.</text>
</comment>
<sequence>MVLPASMRLRGSRCFEHLQKWGYRFYGTSMVLRVIEANPQLLKAPHRHHNSTACRCAVVISSKVSKRAVIRNRLRRLLHDHLRSRLEVAPEHCNHWVLISLKPVASAIEASPLLEECDRLLNQAGLLS</sequence>
<protein>
    <recommendedName>
        <fullName evidence="1">Ribonuclease P protein component</fullName>
        <shortName evidence="1">RNase P protein</shortName>
        <shortName evidence="1">RNaseP protein</shortName>
        <ecNumber evidence="1">3.1.26.5</ecNumber>
    </recommendedName>
    <alternativeName>
        <fullName evidence="1">Protein C5</fullName>
    </alternativeName>
</protein>
<accession>Q7V612</accession>
<evidence type="ECO:0000255" key="1">
    <source>
        <dbReference type="HAMAP-Rule" id="MF_00227"/>
    </source>
</evidence>
<dbReference type="EC" id="3.1.26.5" evidence="1"/>
<dbReference type="EMBL" id="BX548175">
    <property type="protein sequence ID" value="CAE21544.1"/>
    <property type="molecule type" value="Genomic_DNA"/>
</dbReference>
<dbReference type="RefSeq" id="WP_011130737.1">
    <property type="nucleotide sequence ID" value="NC_005071.1"/>
</dbReference>
<dbReference type="SMR" id="Q7V612"/>
<dbReference type="KEGG" id="pmt:PMT_1369"/>
<dbReference type="eggNOG" id="COG0594">
    <property type="taxonomic scope" value="Bacteria"/>
</dbReference>
<dbReference type="HOGENOM" id="CLU_117179_2_0_3"/>
<dbReference type="OrthoDB" id="540358at2"/>
<dbReference type="Proteomes" id="UP000001423">
    <property type="component" value="Chromosome"/>
</dbReference>
<dbReference type="GO" id="GO:0004526">
    <property type="term" value="F:ribonuclease P activity"/>
    <property type="evidence" value="ECO:0007669"/>
    <property type="project" value="UniProtKB-UniRule"/>
</dbReference>
<dbReference type="GO" id="GO:0000049">
    <property type="term" value="F:tRNA binding"/>
    <property type="evidence" value="ECO:0007669"/>
    <property type="project" value="UniProtKB-UniRule"/>
</dbReference>
<dbReference type="GO" id="GO:0001682">
    <property type="term" value="P:tRNA 5'-leader removal"/>
    <property type="evidence" value="ECO:0007669"/>
    <property type="project" value="UniProtKB-UniRule"/>
</dbReference>
<dbReference type="Gene3D" id="3.30.230.10">
    <property type="match status" value="1"/>
</dbReference>
<dbReference type="HAMAP" id="MF_00227">
    <property type="entry name" value="RNase_P"/>
    <property type="match status" value="1"/>
</dbReference>
<dbReference type="InterPro" id="IPR020568">
    <property type="entry name" value="Ribosomal_Su5_D2-typ_SF"/>
</dbReference>
<dbReference type="InterPro" id="IPR014721">
    <property type="entry name" value="Ribsml_uS5_D2-typ_fold_subgr"/>
</dbReference>
<dbReference type="InterPro" id="IPR000100">
    <property type="entry name" value="RNase_P"/>
</dbReference>
<dbReference type="Pfam" id="PF00825">
    <property type="entry name" value="Ribonuclease_P"/>
    <property type="match status" value="1"/>
</dbReference>
<dbReference type="SUPFAM" id="SSF54211">
    <property type="entry name" value="Ribosomal protein S5 domain 2-like"/>
    <property type="match status" value="1"/>
</dbReference>
<name>RNPA_PROMM</name>
<keyword id="KW-0255">Endonuclease</keyword>
<keyword id="KW-0378">Hydrolase</keyword>
<keyword id="KW-0540">Nuclease</keyword>
<keyword id="KW-1185">Reference proteome</keyword>
<keyword id="KW-0694">RNA-binding</keyword>
<keyword id="KW-0819">tRNA processing</keyword>
<proteinExistence type="inferred from homology"/>
<organism>
    <name type="scientific">Prochlorococcus marinus (strain MIT 9313)</name>
    <dbReference type="NCBI Taxonomy" id="74547"/>
    <lineage>
        <taxon>Bacteria</taxon>
        <taxon>Bacillati</taxon>
        <taxon>Cyanobacteriota</taxon>
        <taxon>Cyanophyceae</taxon>
        <taxon>Synechococcales</taxon>
        <taxon>Prochlorococcaceae</taxon>
        <taxon>Prochlorococcus</taxon>
    </lineage>
</organism>
<reference key="1">
    <citation type="journal article" date="2003" name="Nature">
        <title>Genome divergence in two Prochlorococcus ecotypes reflects oceanic niche differentiation.</title>
        <authorList>
            <person name="Rocap G."/>
            <person name="Larimer F.W."/>
            <person name="Lamerdin J.E."/>
            <person name="Malfatti S."/>
            <person name="Chain P."/>
            <person name="Ahlgren N.A."/>
            <person name="Arellano A."/>
            <person name="Coleman M."/>
            <person name="Hauser L."/>
            <person name="Hess W.R."/>
            <person name="Johnson Z.I."/>
            <person name="Land M.L."/>
            <person name="Lindell D."/>
            <person name="Post A.F."/>
            <person name="Regala W."/>
            <person name="Shah M."/>
            <person name="Shaw S.L."/>
            <person name="Steglich C."/>
            <person name="Sullivan M.B."/>
            <person name="Ting C.S."/>
            <person name="Tolonen A."/>
            <person name="Webb E.A."/>
            <person name="Zinser E.R."/>
            <person name="Chisholm S.W."/>
        </authorList>
    </citation>
    <scope>NUCLEOTIDE SEQUENCE [LARGE SCALE GENOMIC DNA]</scope>
    <source>
        <strain>MIT 9313</strain>
    </source>
</reference>
<gene>
    <name evidence="1" type="primary">rnpA</name>
    <name type="ordered locus">PMT_1369</name>
</gene>
<feature type="chain" id="PRO_0000198508" description="Ribonuclease P protein component">
    <location>
        <begin position="1"/>
        <end position="128"/>
    </location>
</feature>